<sequence>MYTSGYAHRSSSFSSAASKIARVSTENTTAGLISEVVYREDQPMMTQLLLLPLLQQLGQQSRWQLWLTPQQKLSREWVQASGLPLTKVMQISQLSPCHTVESMVRALRTGNYSVVIGWLADDLTEEEHAELVDAANEGNAMGFIMRPVSASSHATRQLSGLKIHSNLYH</sequence>
<accession>P0AFZ6</accession>
<accession>P03840</accession>
<accession>P08846</accession>
<accession>P71224</accession>
<comment type="function">
    <text evidence="1">Component of the SOS system and an inhibitor of cell division. Accumulation of SulA causes rapid cessation of cell division and the appearance of long, non-septate filaments. In the presence of GTP, binds a polymerization-competent form of FtsZ in a 1:1 ratio, thus inhibiting FtsZ polymerization and therefore preventing it from participating in the assembly of the Z ring. This mechanism prevents the premature segregation of damaged DNA to daughter cells during cell division.</text>
</comment>
<comment type="subunit">
    <text evidence="1">Interacts with FtsZ.</text>
</comment>
<comment type="induction">
    <text evidence="1">By DNA damage, as part of the SOS response.</text>
</comment>
<comment type="PTM">
    <text evidence="1">Is rapidly cleaved and degraded by the Lon protease once DNA damage is repaired.</text>
</comment>
<comment type="similarity">
    <text evidence="1">Belongs to the SulA family.</text>
</comment>
<protein>
    <recommendedName>
        <fullName evidence="1">Cell division inhibitor SulA</fullName>
    </recommendedName>
</protein>
<gene>
    <name evidence="1" type="primary">sulA</name>
    <name type="ordered locus">Z1308</name>
    <name type="ordered locus">ECs1042</name>
</gene>
<feature type="chain" id="PRO_0000072306" description="Cell division inhibitor SulA">
    <location>
        <begin position="1"/>
        <end position="169"/>
    </location>
</feature>
<feature type="region of interest" description="FtsZ binding" evidence="1">
    <location>
        <begin position="106"/>
        <end position="112"/>
    </location>
</feature>
<feature type="region of interest" description="Lon protease binding" evidence="1">
    <location>
        <begin position="162"/>
        <end position="169"/>
    </location>
</feature>
<feature type="site" description="Essential for degradation by Lon protease" evidence="1">
    <location>
        <position position="169"/>
    </location>
</feature>
<name>SULA_ECO57</name>
<keyword id="KW-0131">Cell cycle</keyword>
<keyword id="KW-0132">Cell division</keyword>
<keyword id="KW-0227">DNA damage</keyword>
<keyword id="KW-1185">Reference proteome</keyword>
<keyword id="KW-0717">Septation</keyword>
<keyword id="KW-0742">SOS response</keyword>
<reference key="1">
    <citation type="journal article" date="2001" name="Nature">
        <title>Genome sequence of enterohaemorrhagic Escherichia coli O157:H7.</title>
        <authorList>
            <person name="Perna N.T."/>
            <person name="Plunkett G. III"/>
            <person name="Burland V."/>
            <person name="Mau B."/>
            <person name="Glasner J.D."/>
            <person name="Rose D.J."/>
            <person name="Mayhew G.F."/>
            <person name="Evans P.S."/>
            <person name="Gregor J."/>
            <person name="Kirkpatrick H.A."/>
            <person name="Posfai G."/>
            <person name="Hackett J."/>
            <person name="Klink S."/>
            <person name="Boutin A."/>
            <person name="Shao Y."/>
            <person name="Miller L."/>
            <person name="Grotbeck E.J."/>
            <person name="Davis N.W."/>
            <person name="Lim A."/>
            <person name="Dimalanta E.T."/>
            <person name="Potamousis K."/>
            <person name="Apodaca J."/>
            <person name="Anantharaman T.S."/>
            <person name="Lin J."/>
            <person name="Yen G."/>
            <person name="Schwartz D.C."/>
            <person name="Welch R.A."/>
            <person name="Blattner F.R."/>
        </authorList>
    </citation>
    <scope>NUCLEOTIDE SEQUENCE [LARGE SCALE GENOMIC DNA]</scope>
    <source>
        <strain>O157:H7 / EDL933 / ATCC 700927 / EHEC</strain>
    </source>
</reference>
<reference key="2">
    <citation type="journal article" date="2001" name="DNA Res.">
        <title>Complete genome sequence of enterohemorrhagic Escherichia coli O157:H7 and genomic comparison with a laboratory strain K-12.</title>
        <authorList>
            <person name="Hayashi T."/>
            <person name="Makino K."/>
            <person name="Ohnishi M."/>
            <person name="Kurokawa K."/>
            <person name="Ishii K."/>
            <person name="Yokoyama K."/>
            <person name="Han C.-G."/>
            <person name="Ohtsubo E."/>
            <person name="Nakayama K."/>
            <person name="Murata T."/>
            <person name="Tanaka M."/>
            <person name="Tobe T."/>
            <person name="Iida T."/>
            <person name="Takami H."/>
            <person name="Honda T."/>
            <person name="Sasakawa C."/>
            <person name="Ogasawara N."/>
            <person name="Yasunaga T."/>
            <person name="Kuhara S."/>
            <person name="Shiba T."/>
            <person name="Hattori M."/>
            <person name="Shinagawa H."/>
        </authorList>
    </citation>
    <scope>NUCLEOTIDE SEQUENCE [LARGE SCALE GENOMIC DNA]</scope>
    <source>
        <strain>O157:H7 / Sakai / RIMD 0509952 / EHEC</strain>
    </source>
</reference>
<dbReference type="EMBL" id="AE005174">
    <property type="protein sequence ID" value="AAG55444.1"/>
    <property type="molecule type" value="Genomic_DNA"/>
</dbReference>
<dbReference type="EMBL" id="BA000007">
    <property type="protein sequence ID" value="BAB34465.1"/>
    <property type="molecule type" value="Genomic_DNA"/>
</dbReference>
<dbReference type="PIR" id="B90759">
    <property type="entry name" value="B90759"/>
</dbReference>
<dbReference type="RefSeq" id="NP_309069.1">
    <property type="nucleotide sequence ID" value="NC_002695.1"/>
</dbReference>
<dbReference type="RefSeq" id="WP_000288710.1">
    <property type="nucleotide sequence ID" value="NZ_VOAI01000006.1"/>
</dbReference>
<dbReference type="SMR" id="P0AFZ6"/>
<dbReference type="STRING" id="155864.Z1308"/>
<dbReference type="GeneID" id="916918"/>
<dbReference type="GeneID" id="93776456"/>
<dbReference type="KEGG" id="ece:Z1308"/>
<dbReference type="KEGG" id="ecs:ECs_1042"/>
<dbReference type="PATRIC" id="fig|386585.9.peg.1166"/>
<dbReference type="eggNOG" id="COG5404">
    <property type="taxonomic scope" value="Bacteria"/>
</dbReference>
<dbReference type="HOGENOM" id="CLU_118972_1_0_6"/>
<dbReference type="OMA" id="YGFIMRP"/>
<dbReference type="Proteomes" id="UP000000558">
    <property type="component" value="Chromosome"/>
</dbReference>
<dbReference type="Proteomes" id="UP000002519">
    <property type="component" value="Chromosome"/>
</dbReference>
<dbReference type="GO" id="GO:0000917">
    <property type="term" value="P:division septum assembly"/>
    <property type="evidence" value="ECO:0007669"/>
    <property type="project" value="UniProtKB-KW"/>
</dbReference>
<dbReference type="GO" id="GO:0006281">
    <property type="term" value="P:DNA repair"/>
    <property type="evidence" value="ECO:0007669"/>
    <property type="project" value="TreeGrafter"/>
</dbReference>
<dbReference type="GO" id="GO:0051782">
    <property type="term" value="P:negative regulation of cell division"/>
    <property type="evidence" value="ECO:0007669"/>
    <property type="project" value="UniProtKB-UniRule"/>
</dbReference>
<dbReference type="GO" id="GO:0009432">
    <property type="term" value="P:SOS response"/>
    <property type="evidence" value="ECO:0007669"/>
    <property type="project" value="UniProtKB-UniRule"/>
</dbReference>
<dbReference type="FunFam" id="3.40.50.300:FF:000417">
    <property type="entry name" value="Cell division inhibitor SulA"/>
    <property type="match status" value="1"/>
</dbReference>
<dbReference type="Gene3D" id="3.40.50.300">
    <property type="entry name" value="P-loop containing nucleotide triphosphate hydrolases"/>
    <property type="match status" value="1"/>
</dbReference>
<dbReference type="HAMAP" id="MF_01179">
    <property type="entry name" value="SulA"/>
    <property type="match status" value="1"/>
</dbReference>
<dbReference type="InterPro" id="IPR004596">
    <property type="entry name" value="Cell_div_suppressor_SulA"/>
</dbReference>
<dbReference type="InterPro" id="IPR027417">
    <property type="entry name" value="P-loop_NTPase"/>
</dbReference>
<dbReference type="InterPro" id="IPR050356">
    <property type="entry name" value="SulA_CellDiv_inhibitor"/>
</dbReference>
<dbReference type="InterPro" id="IPR047696">
    <property type="entry name" value="SulA_enterobact"/>
</dbReference>
<dbReference type="NCBIfam" id="NF007892">
    <property type="entry name" value="PRK10595.1"/>
    <property type="match status" value="1"/>
</dbReference>
<dbReference type="NCBIfam" id="TIGR00623">
    <property type="entry name" value="SOS_SulA_coli"/>
    <property type="match status" value="1"/>
</dbReference>
<dbReference type="PANTHER" id="PTHR35369">
    <property type="entry name" value="BLR3025 PROTEIN-RELATED"/>
    <property type="match status" value="1"/>
</dbReference>
<dbReference type="PANTHER" id="PTHR35369:SF4">
    <property type="entry name" value="CELL DIVISION INHIBITOR SULA"/>
    <property type="match status" value="1"/>
</dbReference>
<dbReference type="Pfam" id="PF03846">
    <property type="entry name" value="SulA"/>
    <property type="match status" value="1"/>
</dbReference>
<dbReference type="PIRSF" id="PIRSF003093">
    <property type="entry name" value="SulA"/>
    <property type="match status" value="1"/>
</dbReference>
<dbReference type="SUPFAM" id="SSF52540">
    <property type="entry name" value="P-loop containing nucleoside triphosphate hydrolases"/>
    <property type="match status" value="1"/>
</dbReference>
<evidence type="ECO:0000255" key="1">
    <source>
        <dbReference type="HAMAP-Rule" id="MF_01179"/>
    </source>
</evidence>
<organism>
    <name type="scientific">Escherichia coli O157:H7</name>
    <dbReference type="NCBI Taxonomy" id="83334"/>
    <lineage>
        <taxon>Bacteria</taxon>
        <taxon>Pseudomonadati</taxon>
        <taxon>Pseudomonadota</taxon>
        <taxon>Gammaproteobacteria</taxon>
        <taxon>Enterobacterales</taxon>
        <taxon>Enterobacteriaceae</taxon>
        <taxon>Escherichia</taxon>
    </lineage>
</organism>
<proteinExistence type="inferred from homology"/>